<evidence type="ECO:0000255" key="1">
    <source>
        <dbReference type="HAMAP-Rule" id="MF_00188"/>
    </source>
</evidence>
<proteinExistence type="inferred from homology"/>
<organism>
    <name type="scientific">Mycolicibacterium gilvum (strain PYR-GCK)</name>
    <name type="common">Mycobacterium gilvum (strain PYR-GCK)</name>
    <dbReference type="NCBI Taxonomy" id="350054"/>
    <lineage>
        <taxon>Bacteria</taxon>
        <taxon>Bacillati</taxon>
        <taxon>Actinomycetota</taxon>
        <taxon>Actinomycetes</taxon>
        <taxon>Mycobacteriales</taxon>
        <taxon>Mycobacteriaceae</taxon>
        <taxon>Mycolicibacterium</taxon>
    </lineage>
</organism>
<comment type="cofactor">
    <cofactor evidence="1">
        <name>Zn(2+)</name>
        <dbReference type="ChEBI" id="CHEBI:29105"/>
    </cofactor>
    <text evidence="1">Binds 1 zinc ion per subunit.</text>
</comment>
<comment type="subcellular location">
    <subcellularLocation>
        <location evidence="1">Cell membrane</location>
        <topology evidence="1">Multi-pass membrane protein</topology>
    </subcellularLocation>
</comment>
<comment type="similarity">
    <text evidence="1">Belongs to the peptidase M48B family.</text>
</comment>
<keyword id="KW-1003">Cell membrane</keyword>
<keyword id="KW-0378">Hydrolase</keyword>
<keyword id="KW-0472">Membrane</keyword>
<keyword id="KW-0479">Metal-binding</keyword>
<keyword id="KW-0482">Metalloprotease</keyword>
<keyword id="KW-0645">Protease</keyword>
<keyword id="KW-0812">Transmembrane</keyword>
<keyword id="KW-1133">Transmembrane helix</keyword>
<keyword id="KW-0862">Zinc</keyword>
<name>HTPX_MYCGI</name>
<protein>
    <recommendedName>
        <fullName evidence="1">Protease HtpX homolog</fullName>
        <ecNumber evidence="1">3.4.24.-</ecNumber>
    </recommendedName>
</protein>
<sequence length="292" mass="31460">MTWHPHANRAKTFLLLAVFSGLIVAVGAMFGRNIMFLAVLFALGMNAYVYFNSDKLALRAMHAQPVNEMQAPVMYKIVRELATTARQPMPRLYISDTAAPNAFATGRNPRNSAVCCTTGILQMLNERELRAVLGHELSHVYNRDILISCVAGAMASVITALANLAFFASMFGGNRDGGTNPFAILLVSLLGPIAATVIRLAVSRSREYQADQSGAELTGDPLALASALRKISSGVERAPLPPEPQLADQAHLMIANPFRAGEKIGKLFATHPPMADRIARLEAMAGRGPGQY</sequence>
<dbReference type="EC" id="3.4.24.-" evidence="1"/>
<dbReference type="EMBL" id="CP000656">
    <property type="protein sequence ID" value="ABP47716.1"/>
    <property type="molecule type" value="Genomic_DNA"/>
</dbReference>
<dbReference type="STRING" id="350054.Mflv_5252"/>
<dbReference type="KEGG" id="mgi:Mflv_5252"/>
<dbReference type="eggNOG" id="COG0501">
    <property type="taxonomic scope" value="Bacteria"/>
</dbReference>
<dbReference type="HOGENOM" id="CLU_042266_3_0_11"/>
<dbReference type="OrthoDB" id="15218at2"/>
<dbReference type="GO" id="GO:0005886">
    <property type="term" value="C:plasma membrane"/>
    <property type="evidence" value="ECO:0007669"/>
    <property type="project" value="UniProtKB-SubCell"/>
</dbReference>
<dbReference type="GO" id="GO:0004222">
    <property type="term" value="F:metalloendopeptidase activity"/>
    <property type="evidence" value="ECO:0007669"/>
    <property type="project" value="UniProtKB-UniRule"/>
</dbReference>
<dbReference type="GO" id="GO:0008270">
    <property type="term" value="F:zinc ion binding"/>
    <property type="evidence" value="ECO:0007669"/>
    <property type="project" value="UniProtKB-UniRule"/>
</dbReference>
<dbReference type="GO" id="GO:0006508">
    <property type="term" value="P:proteolysis"/>
    <property type="evidence" value="ECO:0007669"/>
    <property type="project" value="UniProtKB-KW"/>
</dbReference>
<dbReference type="CDD" id="cd07336">
    <property type="entry name" value="M48B_HtpX_like"/>
    <property type="match status" value="1"/>
</dbReference>
<dbReference type="FunFam" id="3.30.2010.10:FF:000008">
    <property type="entry name" value="Protease HtpX homolog"/>
    <property type="match status" value="1"/>
</dbReference>
<dbReference type="Gene3D" id="3.30.2010.10">
    <property type="entry name" value="Metalloproteases ('zincins'), catalytic domain"/>
    <property type="match status" value="1"/>
</dbReference>
<dbReference type="HAMAP" id="MF_00188">
    <property type="entry name" value="Pept_M48_protease_HtpX"/>
    <property type="match status" value="1"/>
</dbReference>
<dbReference type="InterPro" id="IPR050083">
    <property type="entry name" value="HtpX_protease"/>
</dbReference>
<dbReference type="InterPro" id="IPR022919">
    <property type="entry name" value="Pept_M48_protease_HtpX"/>
</dbReference>
<dbReference type="InterPro" id="IPR001915">
    <property type="entry name" value="Peptidase_M48"/>
</dbReference>
<dbReference type="NCBIfam" id="NF002839">
    <property type="entry name" value="PRK03072.1"/>
    <property type="match status" value="1"/>
</dbReference>
<dbReference type="PANTHER" id="PTHR43221">
    <property type="entry name" value="PROTEASE HTPX"/>
    <property type="match status" value="1"/>
</dbReference>
<dbReference type="PANTHER" id="PTHR43221:SF1">
    <property type="entry name" value="PROTEASE HTPX"/>
    <property type="match status" value="1"/>
</dbReference>
<dbReference type="Pfam" id="PF01435">
    <property type="entry name" value="Peptidase_M48"/>
    <property type="match status" value="1"/>
</dbReference>
<dbReference type="PROSITE" id="PS00142">
    <property type="entry name" value="ZINC_PROTEASE"/>
    <property type="match status" value="1"/>
</dbReference>
<accession>A4T190</accession>
<reference key="1">
    <citation type="submission" date="2007-04" db="EMBL/GenBank/DDBJ databases">
        <title>Complete sequence of chromosome of Mycobacterium gilvum PYR-GCK.</title>
        <authorList>
            <consortium name="US DOE Joint Genome Institute"/>
            <person name="Copeland A."/>
            <person name="Lucas S."/>
            <person name="Lapidus A."/>
            <person name="Barry K."/>
            <person name="Detter J.C."/>
            <person name="Glavina del Rio T."/>
            <person name="Hammon N."/>
            <person name="Israni S."/>
            <person name="Dalin E."/>
            <person name="Tice H."/>
            <person name="Pitluck S."/>
            <person name="Chain P."/>
            <person name="Malfatti S."/>
            <person name="Shin M."/>
            <person name="Vergez L."/>
            <person name="Schmutz J."/>
            <person name="Larimer F."/>
            <person name="Land M."/>
            <person name="Hauser L."/>
            <person name="Kyrpides N."/>
            <person name="Mikhailova N."/>
            <person name="Miller C."/>
            <person name="Richardson P."/>
        </authorList>
    </citation>
    <scope>NUCLEOTIDE SEQUENCE [LARGE SCALE GENOMIC DNA]</scope>
    <source>
        <strain>PYR-GCK</strain>
    </source>
</reference>
<feature type="chain" id="PRO_1000077471" description="Protease HtpX homolog">
    <location>
        <begin position="1"/>
        <end position="292"/>
    </location>
</feature>
<feature type="transmembrane region" description="Helical" evidence="1">
    <location>
        <begin position="10"/>
        <end position="30"/>
    </location>
</feature>
<feature type="transmembrane region" description="Helical" evidence="1">
    <location>
        <begin position="33"/>
        <end position="53"/>
    </location>
</feature>
<feature type="transmembrane region" description="Helical" evidence="1">
    <location>
        <begin position="145"/>
        <end position="165"/>
    </location>
</feature>
<feature type="transmembrane region" description="Helical" evidence="1">
    <location>
        <begin position="182"/>
        <end position="202"/>
    </location>
</feature>
<feature type="active site" evidence="1">
    <location>
        <position position="136"/>
    </location>
</feature>
<feature type="binding site" evidence="1">
    <location>
        <position position="135"/>
    </location>
    <ligand>
        <name>Zn(2+)</name>
        <dbReference type="ChEBI" id="CHEBI:29105"/>
        <note>catalytic</note>
    </ligand>
</feature>
<feature type="binding site" evidence="1">
    <location>
        <position position="139"/>
    </location>
    <ligand>
        <name>Zn(2+)</name>
        <dbReference type="ChEBI" id="CHEBI:29105"/>
        <note>catalytic</note>
    </ligand>
</feature>
<feature type="binding site" evidence="1">
    <location>
        <position position="207"/>
    </location>
    <ligand>
        <name>Zn(2+)</name>
        <dbReference type="ChEBI" id="CHEBI:29105"/>
        <note>catalytic</note>
    </ligand>
</feature>
<gene>
    <name evidence="1" type="primary">htpX</name>
    <name type="ordered locus">Mflv_5252</name>
</gene>